<keyword id="KW-0010">Activator</keyword>
<keyword id="KW-0053">Apoptosis</keyword>
<keyword id="KW-0238">DNA-binding</keyword>
<keyword id="KW-0479">Metal-binding</keyword>
<keyword id="KW-0539">Nucleus</keyword>
<keyword id="KW-1185">Reference proteome</keyword>
<keyword id="KW-0804">Transcription</keyword>
<keyword id="KW-0805">Transcription regulation</keyword>
<keyword id="KW-0043">Tumor suppressor</keyword>
<keyword id="KW-0862">Zinc</keyword>
<organism>
    <name type="scientific">Caenorhabditis briggsae</name>
    <dbReference type="NCBI Taxonomy" id="6238"/>
    <lineage>
        <taxon>Eukaryota</taxon>
        <taxon>Metazoa</taxon>
        <taxon>Ecdysozoa</taxon>
        <taxon>Nematoda</taxon>
        <taxon>Chromadorea</taxon>
        <taxon>Rhabditida</taxon>
        <taxon>Rhabditina</taxon>
        <taxon>Rhabditomorpha</taxon>
        <taxon>Rhabditoidea</taxon>
        <taxon>Rhabditidae</taxon>
        <taxon>Peloderinae</taxon>
        <taxon>Caenorhabditis</taxon>
    </lineage>
</organism>
<comment type="function">
    <text evidence="1">Transcriptional activator that binds the same DNA consensus sequence as p53. Has a role in normal development to ensure proper meiotic chromosome segregation. Promotes apoptosis under conditions of cellular and genotoxic stress in response to DNA damage, hypoxia, or starvation. However, not required for DNA repair in response to UV-C or to regulate cell-cycle progression. Regulates germline apoptosis in response to DNA damage. Required for induction of ced-13 in response to DNA damage. Its pro-apoptotic activity is inhibited when bound to ape-1 in vitro (By similarity). Regulates germline proliferation by activating phg-1. Regulates DNA damage-induced apoptosis by inducing transcription of the programmed cell death activator egl-1. Negatively regulates lifespan.</text>
</comment>
<comment type="cofactor">
    <cofactor evidence="1">
        <name>Zn(2+)</name>
        <dbReference type="ChEBI" id="CHEBI:29105"/>
    </cofactor>
    <text evidence="1">Binds 1 zinc ion per subunit.</text>
</comment>
<comment type="subunit">
    <text evidence="1">Homodimer. Interacts (via C-terminus domain) with prmt-5; not methylated by prmt-5. Interacts with cbp-1 (via HAT domain); cep-1 transcriptional activity may be inhibited by interaction with methylated cbp-1. Component of a complex that contains prmt-5 and cbp-1 (By similarity). Interacts with ape-1; the interaction inhibits pro-apoptotic activity of cep-1 (By similarity).</text>
</comment>
<comment type="subcellular location">
    <subcellularLocation>
        <location evidence="1">Nucleus</location>
    </subcellularLocation>
</comment>
<comment type="induction">
    <text evidence="1 4">By DNA damage.</text>
</comment>
<comment type="PTM">
    <text evidence="1">Phosphorylated in response to IR-induced DNA damage which is thought to be mediated by akt-1.</text>
</comment>
<comment type="similarity">
    <text evidence="2">Belongs to the p53 family.</text>
</comment>
<sequence length="658" mass="76245">MNTEATDSQLSVLIKKEKIVPDSQEVDGNTTRELGDNTLDEIINGQFSPLMSQNSENELEKHLRSTPGIEGVFESLLHNEIQEPDITHLSLMSTHPSESGRQPELIKTRTRTPRIVNDGPLQQTSRSELLDLNALFDTEESALMNQSIESETTLTQFLGGSQPIDYLRERTKEEQDKRNQMRQEEKLIKKMQKAQVEKARSEMFSERNHEFEPMECDNDEEDVFRAVKEDSSNREKEEEWLTFEVKKERASKVSDFEFETVVNDGIYLWAKMKCNIPFIVKWNVSSCHKQLFLKVRLVNYMASDNIENSIRVPSNLAKCHNHRMTEEKTPRESFFYVVKSGEHWTPQINSKKDQCFVAKLAPGTTQVLFDLIFKCQRSCLDLAERRKRMCLAVFLEDENGNELLHDVIKQLLIVGYPRRDWKNFCEKRGDFKFSEKSLLVQTTNNIFADQSSLHSGPSSPEKVTDTSQMFQSTSSSSRKRAASDVKFVASAVPSSDQQSYPMRLHGCESRRMEMSFYRKFKENEDSLSNKRPRSQYGLQRQVKLSEKEYSKFVAFFAKEGENEISKYASAHCLTPAQASRLDPSDKIEKFLAFVGDESAADNFRKHGLFTMLDLDKYFQVYDSAFETIGVDSSKMEKYYDLFLHYHRVQENIRYNQPK</sequence>
<accession>A8WW61</accession>
<reference evidence="5" key="1">
    <citation type="journal article" date="2003" name="PLoS Biol.">
        <title>The genome sequence of Caenorhabditis briggsae: a platform for comparative genomics.</title>
        <authorList>
            <person name="Stein L.D."/>
            <person name="Bao Z."/>
            <person name="Blasiar D."/>
            <person name="Blumenthal T."/>
            <person name="Brent M.R."/>
            <person name="Chen N."/>
            <person name="Chinwalla A."/>
            <person name="Clarke L."/>
            <person name="Clee C."/>
            <person name="Coghlan A."/>
            <person name="Coulson A."/>
            <person name="D'Eustachio P."/>
            <person name="Fitch D.H.A."/>
            <person name="Fulton L.A."/>
            <person name="Fulton R.E."/>
            <person name="Griffiths-Jones S."/>
            <person name="Harris T.W."/>
            <person name="Hillier L.W."/>
            <person name="Kamath R."/>
            <person name="Kuwabara P.E."/>
            <person name="Mardis E.R."/>
            <person name="Marra M.A."/>
            <person name="Miner T.L."/>
            <person name="Minx P."/>
            <person name="Mullikin J.C."/>
            <person name="Plumb R.W."/>
            <person name="Rogers J."/>
            <person name="Schein J.E."/>
            <person name="Sohrmann M."/>
            <person name="Spieth J."/>
            <person name="Stajich J.E."/>
            <person name="Wei C."/>
            <person name="Willey D."/>
            <person name="Wilson R.K."/>
            <person name="Durbin R.M."/>
            <person name="Waterston R.H."/>
        </authorList>
    </citation>
    <scope>NUCLEOTIDE SEQUENCE [LARGE SCALE GENOMIC DNA]</scope>
    <source>
        <strain evidence="5">AF16</strain>
    </source>
</reference>
<reference evidence="4" key="2">
    <citation type="journal article" date="2005" name="Cell">
        <title>Translational repression of C. elegans p53 by GLD-1 regulates DNA damage-induced apoptosis.</title>
        <authorList>
            <person name="Schumacher B."/>
            <person name="Hanazawa M."/>
            <person name="Lee M.-H."/>
            <person name="Nayak S."/>
            <person name="Volkmann K."/>
            <person name="Hofmann E.R."/>
            <person name="Hengartner M.O."/>
            <person name="Schedl T."/>
            <person name="Gartner A."/>
        </authorList>
    </citation>
    <scope>IDENTIFICATION</scope>
</reference>
<reference evidence="4" key="3">
    <citation type="journal article" date="2007" name="EMBO J.">
        <title>Structural evolution of C-terminal domains in the p53 family.</title>
        <authorList>
            <person name="Ou H.D."/>
            <person name="Loehr F."/>
            <person name="Vogel V."/>
            <person name="Maentele W."/>
            <person name="Doetsch V."/>
        </authorList>
    </citation>
    <scope>DNA-BINDING</scope>
</reference>
<proteinExistence type="evidence at protein level"/>
<feature type="chain" id="PRO_0000374067" description="Transcription factor cep-1">
    <location>
        <begin position="1"/>
        <end position="658"/>
    </location>
</feature>
<feature type="DNA-binding region" evidence="2">
    <location>
        <begin position="238"/>
        <end position="428"/>
    </location>
</feature>
<feature type="region of interest" description="Disordered" evidence="3">
    <location>
        <begin position="450"/>
        <end position="477"/>
    </location>
</feature>
<feature type="region of interest" description="Required for tertiary structure stability of the protein" evidence="1">
    <location>
        <begin position="535"/>
        <end position="564"/>
    </location>
</feature>
<feature type="compositionally biased region" description="Low complexity" evidence="3">
    <location>
        <begin position="466"/>
        <end position="476"/>
    </location>
</feature>
<feature type="binding site" evidence="1">
    <location>
        <position position="319"/>
    </location>
    <ligand>
        <name>Zn(2+)</name>
        <dbReference type="ChEBI" id="CHEBI:29105"/>
    </ligand>
</feature>
<feature type="binding site" evidence="1">
    <location>
        <position position="322"/>
    </location>
    <ligand>
        <name>Zn(2+)</name>
        <dbReference type="ChEBI" id="CHEBI:29105"/>
    </ligand>
</feature>
<feature type="binding site" evidence="1">
    <location>
        <position position="375"/>
    </location>
    <ligand>
        <name>Zn(2+)</name>
        <dbReference type="ChEBI" id="CHEBI:29105"/>
    </ligand>
</feature>
<feature type="binding site" evidence="1">
    <location>
        <position position="379"/>
    </location>
    <ligand>
        <name>Zn(2+)</name>
        <dbReference type="ChEBI" id="CHEBI:29105"/>
    </ligand>
</feature>
<evidence type="ECO:0000250" key="1">
    <source>
        <dbReference type="UniProtKB" id="Q20646"/>
    </source>
</evidence>
<evidence type="ECO:0000255" key="2"/>
<evidence type="ECO:0000256" key="3">
    <source>
        <dbReference type="SAM" id="MobiDB-lite"/>
    </source>
</evidence>
<evidence type="ECO:0000305" key="4"/>
<evidence type="ECO:0000312" key="5">
    <source>
        <dbReference type="EMBL" id="CAP24870.2"/>
    </source>
</evidence>
<evidence type="ECO:0000312" key="6">
    <source>
        <dbReference type="WormBase" id="CBG04081"/>
    </source>
</evidence>
<name>CEP1_CAEBR</name>
<gene>
    <name evidence="6" type="primary">cep-1</name>
    <name evidence="6" type="ORF">CBG04081</name>
</gene>
<dbReference type="EMBL" id="HE600906">
    <property type="protein sequence ID" value="CAP24870.2"/>
    <property type="molecule type" value="Genomic_DNA"/>
</dbReference>
<dbReference type="SMR" id="A8WW61"/>
<dbReference type="FunCoup" id="A8WW61">
    <property type="interactions" value="693"/>
</dbReference>
<dbReference type="STRING" id="6238.A8WW61"/>
<dbReference type="EnsemblMetazoa" id="CBG04081.1">
    <property type="protein sequence ID" value="CBG04081.1"/>
    <property type="gene ID" value="WBGene00026824"/>
</dbReference>
<dbReference type="WormBase" id="CBG04081">
    <property type="protein sequence ID" value="CBP32131"/>
    <property type="gene ID" value="WBGene00026824"/>
    <property type="gene designation" value="Cbr-cep-1"/>
</dbReference>
<dbReference type="eggNOG" id="ENOG502TH76">
    <property type="taxonomic scope" value="Eukaryota"/>
</dbReference>
<dbReference type="HOGENOM" id="CLU_425295_0_0_1"/>
<dbReference type="InParanoid" id="A8WW61"/>
<dbReference type="OMA" id="VAYPRRD"/>
<dbReference type="Proteomes" id="UP000008549">
    <property type="component" value="Unassembled WGS sequence"/>
</dbReference>
<dbReference type="GO" id="GO:0043073">
    <property type="term" value="C:germ cell nucleus"/>
    <property type="evidence" value="ECO:0007669"/>
    <property type="project" value="EnsemblMetazoa"/>
</dbReference>
<dbReference type="GO" id="GO:0005730">
    <property type="term" value="C:nucleolus"/>
    <property type="evidence" value="ECO:0007669"/>
    <property type="project" value="EnsemblMetazoa"/>
</dbReference>
<dbReference type="GO" id="GO:0005654">
    <property type="term" value="C:nucleoplasm"/>
    <property type="evidence" value="ECO:0007669"/>
    <property type="project" value="EnsemblMetazoa"/>
</dbReference>
<dbReference type="GO" id="GO:0005634">
    <property type="term" value="C:nucleus"/>
    <property type="evidence" value="ECO:0000250"/>
    <property type="project" value="UniProtKB"/>
</dbReference>
<dbReference type="GO" id="GO:0017053">
    <property type="term" value="C:transcription repressor complex"/>
    <property type="evidence" value="ECO:0007669"/>
    <property type="project" value="EnsemblMetazoa"/>
</dbReference>
<dbReference type="GO" id="GO:0003700">
    <property type="term" value="F:DNA-binding transcription factor activity"/>
    <property type="evidence" value="ECO:0000250"/>
    <property type="project" value="UniProtKB"/>
</dbReference>
<dbReference type="GO" id="GO:0042803">
    <property type="term" value="F:protein homodimerization activity"/>
    <property type="evidence" value="ECO:0000250"/>
    <property type="project" value="UniProtKB"/>
</dbReference>
<dbReference type="GO" id="GO:0043565">
    <property type="term" value="F:sequence-specific DNA binding"/>
    <property type="evidence" value="ECO:0000250"/>
    <property type="project" value="UniProtKB"/>
</dbReference>
<dbReference type="GO" id="GO:0008270">
    <property type="term" value="F:zinc ion binding"/>
    <property type="evidence" value="ECO:0000250"/>
    <property type="project" value="UniProtKB"/>
</dbReference>
<dbReference type="GO" id="GO:0008340">
    <property type="term" value="P:determination of adult lifespan"/>
    <property type="evidence" value="ECO:0000250"/>
    <property type="project" value="UniProtKB"/>
</dbReference>
<dbReference type="GO" id="GO:0042771">
    <property type="term" value="P:intrinsic apoptotic signaling pathway in response to DNA damage by p53 class mediator"/>
    <property type="evidence" value="ECO:0000250"/>
    <property type="project" value="UniProtKB"/>
</dbReference>
<dbReference type="GO" id="GO:0045132">
    <property type="term" value="P:meiotic chromosome segregation"/>
    <property type="evidence" value="ECO:0000250"/>
    <property type="project" value="UniProtKB"/>
</dbReference>
<dbReference type="GO" id="GO:0045944">
    <property type="term" value="P:positive regulation of transcription by RNA polymerase II"/>
    <property type="evidence" value="ECO:0007669"/>
    <property type="project" value="EnsemblMetazoa"/>
</dbReference>
<dbReference type="GO" id="GO:0006355">
    <property type="term" value="P:regulation of DNA-templated transcription"/>
    <property type="evidence" value="ECO:0000250"/>
    <property type="project" value="UniProtKB"/>
</dbReference>
<dbReference type="GO" id="GO:0001666">
    <property type="term" value="P:response to hypoxia"/>
    <property type="evidence" value="ECO:0000250"/>
    <property type="project" value="UniProtKB"/>
</dbReference>
<dbReference type="GO" id="GO:0006979">
    <property type="term" value="P:response to oxidative stress"/>
    <property type="evidence" value="ECO:0000250"/>
    <property type="project" value="UniProtKB"/>
</dbReference>
<dbReference type="GO" id="GO:0042594">
    <property type="term" value="P:response to starvation"/>
    <property type="evidence" value="ECO:0007669"/>
    <property type="project" value="EnsemblMetazoa"/>
</dbReference>
<dbReference type="GO" id="GO:0042770">
    <property type="term" value="P:signal transduction in response to DNA damage"/>
    <property type="evidence" value="ECO:0007669"/>
    <property type="project" value="EnsemblMetazoa"/>
</dbReference>
<dbReference type="Gene3D" id="1.10.150.830">
    <property type="match status" value="1"/>
</dbReference>
<dbReference type="Gene3D" id="2.60.40.720">
    <property type="match status" value="1"/>
</dbReference>
<dbReference type="InterPro" id="IPR054106">
    <property type="entry name" value="CEP-1_C"/>
</dbReference>
<dbReference type="InterPro" id="IPR008967">
    <property type="entry name" value="p53-like_TF_DNA-bd_sf"/>
</dbReference>
<dbReference type="InterPro" id="IPR012346">
    <property type="entry name" value="p53/RUNT-type_TF_DNA-bd_sf"/>
</dbReference>
<dbReference type="InterPro" id="IPR015367">
    <property type="entry name" value="Trans_fact_CEP1_DNA-bd"/>
</dbReference>
<dbReference type="Pfam" id="PF09287">
    <property type="entry name" value="CEP1-DNA_bind"/>
    <property type="match status" value="1"/>
</dbReference>
<dbReference type="Pfam" id="PF21907">
    <property type="entry name" value="SAM_CEP-1_C"/>
    <property type="match status" value="1"/>
</dbReference>
<dbReference type="SUPFAM" id="SSF49417">
    <property type="entry name" value="p53-like transcription factors"/>
    <property type="match status" value="1"/>
</dbReference>
<protein>
    <recommendedName>
        <fullName evidence="1">Transcription factor cep-1</fullName>
    </recommendedName>
</protein>